<keyword id="KW-0963">Cytoplasm</keyword>
<keyword id="KW-0408">Iron</keyword>
<keyword id="KW-0411">Iron-sulfur</keyword>
<keyword id="KW-0479">Metal-binding</keyword>
<keyword id="KW-1185">Reference proteome</keyword>
<comment type="function">
    <text evidence="1">Required for the first step of diphthamide biosynthesis, a post-translational modification of histidine which occurs in elongation factor 2. DPH1 and DPH2 transfer a 3-amino-3-carboxypropyl (ACP) group from S-adenosyl-L-methionine (SAM) to a histidine residue, the reaction is assisted by a reduction system comprising DPH3 and a NADH-dependent reductase, predominantly CBR1 (By similarity). Facilitates the reduction of the catalytic iron-sulfur cluster found in the DPH1 subunit (By similarity).</text>
</comment>
<comment type="cofactor">
    <cofactor evidence="1">
        <name>[4Fe-4S] cluster</name>
        <dbReference type="ChEBI" id="CHEBI:49883"/>
    </cofactor>
    <text evidence="1">Binds 1 [4Fe-4S] cluster per subunit. The cluster facilitates the reduction of the catalytic iron-sulfur cluster in the DPH1 subunit.</text>
</comment>
<comment type="pathway">
    <text evidence="1">Protein modification; peptidyl-diphthamide biosynthesis.</text>
</comment>
<comment type="subunit">
    <text evidence="1">Component of the 2-(3-amino-3-carboxypropyl)histidine synthase complex composed of DPH1, DPH2, DPH3 and a NADH-dependent reductase, predominantly CBR1.</text>
</comment>
<comment type="subcellular location">
    <subcellularLocation>
        <location evidence="1">Cytoplasm</location>
    </subcellularLocation>
</comment>
<comment type="similarity">
    <text evidence="2">Belongs to the DPH1/DPH2 family. DPH2 subfamily.</text>
</comment>
<gene>
    <name type="ordered locus">CAALFM_C400490WA</name>
    <name type="ORF">CaO19.13123</name>
    <name type="ORF">CaO19.5678</name>
</gene>
<accession>A0A1D8PL26</accession>
<evidence type="ECO:0000250" key="1">
    <source>
        <dbReference type="UniProtKB" id="P32461"/>
    </source>
</evidence>
<evidence type="ECO:0000305" key="2"/>
<reference key="1">
    <citation type="journal article" date="2004" name="Proc. Natl. Acad. Sci. U.S.A.">
        <title>The diploid genome sequence of Candida albicans.</title>
        <authorList>
            <person name="Jones T."/>
            <person name="Federspiel N.A."/>
            <person name="Chibana H."/>
            <person name="Dungan J."/>
            <person name="Kalman S."/>
            <person name="Magee B.B."/>
            <person name="Newport G."/>
            <person name="Thorstenson Y.R."/>
            <person name="Agabian N."/>
            <person name="Magee P.T."/>
            <person name="Davis R.W."/>
            <person name="Scherer S."/>
        </authorList>
    </citation>
    <scope>NUCLEOTIDE SEQUENCE [LARGE SCALE GENOMIC DNA]</scope>
    <source>
        <strain>SC5314 / ATCC MYA-2876</strain>
    </source>
</reference>
<reference key="2">
    <citation type="journal article" date="2007" name="Genome Biol.">
        <title>Assembly of the Candida albicans genome into sixteen supercontigs aligned on the eight chromosomes.</title>
        <authorList>
            <person name="van het Hoog M."/>
            <person name="Rast T.J."/>
            <person name="Martchenko M."/>
            <person name="Grindle S."/>
            <person name="Dignard D."/>
            <person name="Hogues H."/>
            <person name="Cuomo C."/>
            <person name="Berriman M."/>
            <person name="Scherer S."/>
            <person name="Magee B.B."/>
            <person name="Whiteway M."/>
            <person name="Chibana H."/>
            <person name="Nantel A."/>
            <person name="Magee P.T."/>
        </authorList>
    </citation>
    <scope>GENOME REANNOTATION</scope>
    <source>
        <strain>SC5314 / ATCC MYA-2876</strain>
    </source>
</reference>
<reference key="3">
    <citation type="journal article" date="2013" name="Genome Biol.">
        <title>Assembly of a phased diploid Candida albicans genome facilitates allele-specific measurements and provides a simple model for repeat and indel structure.</title>
        <authorList>
            <person name="Muzzey D."/>
            <person name="Schwartz K."/>
            <person name="Weissman J.S."/>
            <person name="Sherlock G."/>
        </authorList>
    </citation>
    <scope>NUCLEOTIDE SEQUENCE [LARGE SCALE GENOMIC DNA]</scope>
    <scope>GENOME REANNOTATION</scope>
    <source>
        <strain>SC5314 / ATCC MYA-2876</strain>
    </source>
</reference>
<proteinExistence type="inferred from homology"/>
<sequence length="529" mass="59168">MTSETVIAPSLSTAQNDGTFTYDKVKSTAKERKHLNLKNPSDANEIKSKIWNYYSLSELIQYLGQKENDDFKYKRITLQFPDNLICDSATIVHELQRELNIVPQANQDTGESNTAQRVWILADTSYSACCVDEVAAEHVRSDLVVHFGDACLNEIDKLQAVFVLGKPTLDVDAIVKQIKTAYSTEQKVVLMSDAPHTYLLPEIAKQLPDYDILIADLPKTSRAKIIGYTPPPTGHKKFNRVFNTDTVEFGKYELFHITSPESPRLLQLTTNFASVTTYDPISGTVSTGPFPNLMRRYKYVHQARMAGTVGILVNTLSLANTKVLLNTIKEKIKEAGKKHYIFVVGKPNVAKLANFESVDIWCILGCDHQGIIIDQINEYYKPIVTPYELLLGLSDELSWTGKWVVDYKSVLEEYGNEVIQQNEDPDTDEDLPPVFDPVTGRYVSTSKPLRQINHLMVTSSEQGGVDDHDNQLVKRFSNAVAIKGTVSTSAIHLQNRHWTGLGSDYTEDENAAGALVEDGRKGIARGYDI</sequence>
<dbReference type="EMBL" id="CP017626">
    <property type="protein sequence ID" value="AOW28842.1"/>
    <property type="molecule type" value="Genomic_DNA"/>
</dbReference>
<dbReference type="RefSeq" id="XP_713359.2">
    <property type="nucleotide sequence ID" value="XM_708266.2"/>
</dbReference>
<dbReference type="SMR" id="A0A1D8PL26"/>
<dbReference type="FunCoup" id="A0A1D8PL26">
    <property type="interactions" value="990"/>
</dbReference>
<dbReference type="STRING" id="237561.A0A1D8PL26"/>
<dbReference type="EnsemblFungi" id="C4_00490W_A-T">
    <property type="protein sequence ID" value="C4_00490W_A-T-p1"/>
    <property type="gene ID" value="C4_00490W_A"/>
</dbReference>
<dbReference type="GeneID" id="3645013"/>
<dbReference type="KEGG" id="cal:CAALFM_C400490WA"/>
<dbReference type="CGD" id="CAL0000182165">
    <property type="gene designation" value="orf19.13123"/>
</dbReference>
<dbReference type="VEuPathDB" id="FungiDB:C4_00490W_A"/>
<dbReference type="eggNOG" id="KOG2648">
    <property type="taxonomic scope" value="Eukaryota"/>
</dbReference>
<dbReference type="InParanoid" id="A0A1D8PL26"/>
<dbReference type="OrthoDB" id="449241at2759"/>
<dbReference type="UniPathway" id="UPA00559"/>
<dbReference type="Proteomes" id="UP000000559">
    <property type="component" value="Chromosome 4"/>
</dbReference>
<dbReference type="GO" id="GO:0120513">
    <property type="term" value="C:2-(3-amino-3-carboxypropyl)histidine synthase complex"/>
    <property type="evidence" value="ECO:0000250"/>
    <property type="project" value="UniProtKB"/>
</dbReference>
<dbReference type="GO" id="GO:0005737">
    <property type="term" value="C:cytoplasm"/>
    <property type="evidence" value="ECO:0007669"/>
    <property type="project" value="UniProtKB-SubCell"/>
</dbReference>
<dbReference type="GO" id="GO:0090560">
    <property type="term" value="F:2-(3-amino-3-carboxypropyl)histidine synthase activity"/>
    <property type="evidence" value="ECO:0007669"/>
    <property type="project" value="InterPro"/>
</dbReference>
<dbReference type="GO" id="GO:0051539">
    <property type="term" value="F:4 iron, 4 sulfur cluster binding"/>
    <property type="evidence" value="ECO:0000250"/>
    <property type="project" value="UniProtKB"/>
</dbReference>
<dbReference type="GO" id="GO:0046872">
    <property type="term" value="F:metal ion binding"/>
    <property type="evidence" value="ECO:0007669"/>
    <property type="project" value="UniProtKB-KW"/>
</dbReference>
<dbReference type="GO" id="GO:0017183">
    <property type="term" value="P:protein histidyl modification to diphthamide"/>
    <property type="evidence" value="ECO:0000250"/>
    <property type="project" value="UniProtKB"/>
</dbReference>
<dbReference type="FunFam" id="3.40.50.11860:FF:000001">
    <property type="entry name" value="2-(3-amino-3-carboxypropyl)histidine synthase subunit 2"/>
    <property type="match status" value="1"/>
</dbReference>
<dbReference type="Gene3D" id="3.40.50.11840">
    <property type="entry name" value="Diphthamide synthesis DPH1/DPH2 domain 1"/>
    <property type="match status" value="1"/>
</dbReference>
<dbReference type="Gene3D" id="3.40.50.11860">
    <property type="entry name" value="Diphthamide synthesis DPH1/DPH2 domain 3"/>
    <property type="match status" value="1"/>
</dbReference>
<dbReference type="InterPro" id="IPR010014">
    <property type="entry name" value="DHP2"/>
</dbReference>
<dbReference type="InterPro" id="IPR016435">
    <property type="entry name" value="DPH1/DPH2"/>
</dbReference>
<dbReference type="InterPro" id="IPR042263">
    <property type="entry name" value="DPH1/DPH2_1"/>
</dbReference>
<dbReference type="InterPro" id="IPR042265">
    <property type="entry name" value="DPH1/DPH2_3"/>
</dbReference>
<dbReference type="NCBIfam" id="TIGR00322">
    <property type="entry name" value="diphth2_R"/>
    <property type="match status" value="1"/>
</dbReference>
<dbReference type="NCBIfam" id="TIGR00272">
    <property type="entry name" value="DPH2"/>
    <property type="match status" value="1"/>
</dbReference>
<dbReference type="PANTHER" id="PTHR10762:SF2">
    <property type="entry name" value="2-(3-AMINO-3-CARBOXYPROPYL)HISTIDINE SYNTHASE SUBUNIT 2"/>
    <property type="match status" value="1"/>
</dbReference>
<dbReference type="PANTHER" id="PTHR10762">
    <property type="entry name" value="DIPHTHAMIDE BIOSYNTHESIS PROTEIN"/>
    <property type="match status" value="1"/>
</dbReference>
<dbReference type="Pfam" id="PF01866">
    <property type="entry name" value="Diphthamide_syn"/>
    <property type="match status" value="1"/>
</dbReference>
<dbReference type="SFLD" id="SFLDG01121">
    <property type="entry name" value="Diphthamide_biosynthesis"/>
    <property type="match status" value="1"/>
</dbReference>
<dbReference type="SFLD" id="SFLDF00408">
    <property type="entry name" value="Diphthamide_biosynthesis_famil"/>
    <property type="match status" value="1"/>
</dbReference>
<dbReference type="SFLD" id="SFLDS00032">
    <property type="entry name" value="Radical_SAM_3-amino-3-carboxyp"/>
    <property type="match status" value="1"/>
</dbReference>
<organism>
    <name type="scientific">Candida albicans (strain SC5314 / ATCC MYA-2876)</name>
    <name type="common">Yeast</name>
    <dbReference type="NCBI Taxonomy" id="237561"/>
    <lineage>
        <taxon>Eukaryota</taxon>
        <taxon>Fungi</taxon>
        <taxon>Dikarya</taxon>
        <taxon>Ascomycota</taxon>
        <taxon>Saccharomycotina</taxon>
        <taxon>Pichiomycetes</taxon>
        <taxon>Debaryomycetaceae</taxon>
        <taxon>Candida/Lodderomyces clade</taxon>
        <taxon>Candida</taxon>
    </lineage>
</organism>
<protein>
    <recommendedName>
        <fullName evidence="1">2-(3-amino-3-carboxypropyl)histidine synthase subunit 2-2</fullName>
    </recommendedName>
    <alternativeName>
        <fullName evidence="2">Diphthamide biosynthesis protein 2-2</fullName>
    </alternativeName>
</protein>
<feature type="chain" id="PRO_0000439093" description="2-(3-amino-3-carboxypropyl)histidine synthase subunit 2-2">
    <location>
        <begin position="1"/>
        <end position="529"/>
    </location>
</feature>
<feature type="binding site" evidence="1">
    <location>
        <position position="130"/>
    </location>
    <ligand>
        <name>[4Fe-4S] cluster</name>
        <dbReference type="ChEBI" id="CHEBI:49883"/>
    </ligand>
</feature>
<feature type="binding site" evidence="1">
    <location>
        <position position="151"/>
    </location>
    <ligand>
        <name>[4Fe-4S] cluster</name>
        <dbReference type="ChEBI" id="CHEBI:49883"/>
    </ligand>
</feature>
<feature type="binding site" evidence="1">
    <location>
        <position position="366"/>
    </location>
    <ligand>
        <name>[4Fe-4S] cluster</name>
        <dbReference type="ChEBI" id="CHEBI:49883"/>
    </ligand>
</feature>
<name>DPH22_CANAL</name>